<organism>
    <name type="scientific">Meyerozyma guilliermondii (strain ATCC 6260 / CBS 566 / DSM 6381 / JCM 1539 / NBRC 10279 / NRRL Y-324)</name>
    <name type="common">Yeast</name>
    <name type="synonym">Candida guilliermondii</name>
    <dbReference type="NCBI Taxonomy" id="294746"/>
    <lineage>
        <taxon>Eukaryota</taxon>
        <taxon>Fungi</taxon>
        <taxon>Dikarya</taxon>
        <taxon>Ascomycota</taxon>
        <taxon>Saccharomycotina</taxon>
        <taxon>Pichiomycetes</taxon>
        <taxon>Debaryomycetaceae</taxon>
        <taxon>Meyerozyma</taxon>
    </lineage>
</organism>
<keyword id="KW-0227">DNA damage</keyword>
<keyword id="KW-0233">DNA recombination</keyword>
<keyword id="KW-0234">DNA repair</keyword>
<keyword id="KW-0539">Nucleus</keyword>
<keyword id="KW-0597">Phosphoprotein</keyword>
<keyword id="KW-1185">Reference proteome</keyword>
<dbReference type="EMBL" id="CH408157">
    <property type="protein sequence ID" value="EDK39102.2"/>
    <property type="molecule type" value="Genomic_DNA"/>
</dbReference>
<dbReference type="RefSeq" id="XP_001485471.1">
    <property type="nucleotide sequence ID" value="XM_001485421.1"/>
</dbReference>
<dbReference type="SMR" id="A5DIU9"/>
<dbReference type="FunCoup" id="A5DIU9">
    <property type="interactions" value="39"/>
</dbReference>
<dbReference type="GeneID" id="5127109"/>
<dbReference type="KEGG" id="pgu:PGUG_03200"/>
<dbReference type="VEuPathDB" id="FungiDB:PGUG_03200"/>
<dbReference type="eggNOG" id="ENOG502RS18">
    <property type="taxonomic scope" value="Eukaryota"/>
</dbReference>
<dbReference type="HOGENOM" id="CLU_429039_0_0_1"/>
<dbReference type="InParanoid" id="A5DIU9"/>
<dbReference type="OMA" id="CKEPAND"/>
<dbReference type="OrthoDB" id="5349119at2759"/>
<dbReference type="Proteomes" id="UP000001997">
    <property type="component" value="Unassembled WGS sequence"/>
</dbReference>
<dbReference type="GO" id="GO:0033557">
    <property type="term" value="C:Slx1-Slx4 complex"/>
    <property type="evidence" value="ECO:0007669"/>
    <property type="project" value="UniProtKB-UniRule"/>
</dbReference>
<dbReference type="GO" id="GO:0017108">
    <property type="term" value="F:5'-flap endonuclease activity"/>
    <property type="evidence" value="ECO:0007669"/>
    <property type="project" value="InterPro"/>
</dbReference>
<dbReference type="GO" id="GO:0006310">
    <property type="term" value="P:DNA recombination"/>
    <property type="evidence" value="ECO:0007669"/>
    <property type="project" value="UniProtKB-UniRule"/>
</dbReference>
<dbReference type="GO" id="GO:0006281">
    <property type="term" value="P:DNA repair"/>
    <property type="evidence" value="ECO:0007669"/>
    <property type="project" value="UniProtKB-UniRule"/>
</dbReference>
<dbReference type="GO" id="GO:0006260">
    <property type="term" value="P:DNA replication"/>
    <property type="evidence" value="ECO:0007669"/>
    <property type="project" value="InterPro"/>
</dbReference>
<dbReference type="HAMAP" id="MF_03110">
    <property type="entry name" value="Endonuc_su_Slx4"/>
    <property type="match status" value="1"/>
</dbReference>
<dbReference type="InterPro" id="IPR027784">
    <property type="entry name" value="Slx4_ascomycetes"/>
</dbReference>
<dbReference type="InterPro" id="IPR018574">
    <property type="entry name" value="Structure-sp_endonuc_su_Slx4"/>
</dbReference>
<dbReference type="Pfam" id="PF09494">
    <property type="entry name" value="Slx4"/>
    <property type="match status" value="1"/>
</dbReference>
<protein>
    <recommendedName>
        <fullName evidence="1">Structure-specific endonuclease subunit SLX4</fullName>
    </recommendedName>
</protein>
<accession>A5DIU9</accession>
<reference key="1">
    <citation type="journal article" date="2009" name="Nature">
        <title>Evolution of pathogenicity and sexual reproduction in eight Candida genomes.</title>
        <authorList>
            <person name="Butler G."/>
            <person name="Rasmussen M.D."/>
            <person name="Lin M.F."/>
            <person name="Santos M.A.S."/>
            <person name="Sakthikumar S."/>
            <person name="Munro C.A."/>
            <person name="Rheinbay E."/>
            <person name="Grabherr M."/>
            <person name="Forche A."/>
            <person name="Reedy J.L."/>
            <person name="Agrafioti I."/>
            <person name="Arnaud M.B."/>
            <person name="Bates S."/>
            <person name="Brown A.J.P."/>
            <person name="Brunke S."/>
            <person name="Costanzo M.C."/>
            <person name="Fitzpatrick D.A."/>
            <person name="de Groot P.W.J."/>
            <person name="Harris D."/>
            <person name="Hoyer L.L."/>
            <person name="Hube B."/>
            <person name="Klis F.M."/>
            <person name="Kodira C."/>
            <person name="Lennard N."/>
            <person name="Logue M.E."/>
            <person name="Martin R."/>
            <person name="Neiman A.M."/>
            <person name="Nikolaou E."/>
            <person name="Quail M.A."/>
            <person name="Quinn J."/>
            <person name="Santos M.C."/>
            <person name="Schmitzberger F.F."/>
            <person name="Sherlock G."/>
            <person name="Shah P."/>
            <person name="Silverstein K.A.T."/>
            <person name="Skrzypek M.S."/>
            <person name="Soll D."/>
            <person name="Staggs R."/>
            <person name="Stansfield I."/>
            <person name="Stumpf M.P.H."/>
            <person name="Sudbery P.E."/>
            <person name="Srikantha T."/>
            <person name="Zeng Q."/>
            <person name="Berman J."/>
            <person name="Berriman M."/>
            <person name="Heitman J."/>
            <person name="Gow N.A.R."/>
            <person name="Lorenz M.C."/>
            <person name="Birren B.W."/>
            <person name="Kellis M."/>
            <person name="Cuomo C.A."/>
        </authorList>
    </citation>
    <scope>NUCLEOTIDE SEQUENCE [LARGE SCALE GENOMIC DNA]</scope>
    <source>
        <strain>ATCC 6260 / CBS 566 / DSM 6381 / JCM 1539 / NBRC 10279 / NRRL Y-324</strain>
    </source>
</reference>
<comment type="function">
    <text evidence="1">Regulatory subunit of the SLX1-SLX4 structure-specific endonuclease that resolves DNA secondary structures generated during DNA repair and recombination. Has endonuclease activity towards branched DNA substrates, introducing single-strand cuts in duplex DNA close to junctions with ss-DNA.</text>
</comment>
<comment type="subunit">
    <text evidence="1">Forms a heterodimer with SLX1.</text>
</comment>
<comment type="subcellular location">
    <subcellularLocation>
        <location evidence="1">Nucleus</location>
    </subcellularLocation>
</comment>
<comment type="PTM">
    <text evidence="1">Phosphorylated in response to DNA damage.</text>
</comment>
<comment type="similarity">
    <text evidence="1">Belongs to the SLX4 family.</text>
</comment>
<gene>
    <name evidence="1" type="primary">SLX4</name>
    <name type="ORF">PGUG_03200</name>
</gene>
<feature type="chain" id="PRO_0000388041" description="Structure-specific endonuclease subunit SLX4">
    <location>
        <begin position="1"/>
        <end position="681"/>
    </location>
</feature>
<feature type="region of interest" description="Disordered" evidence="2">
    <location>
        <begin position="239"/>
        <end position="305"/>
    </location>
</feature>
<feature type="region of interest" description="Disordered" evidence="2">
    <location>
        <begin position="505"/>
        <end position="528"/>
    </location>
</feature>
<feature type="compositionally biased region" description="Polar residues" evidence="2">
    <location>
        <begin position="251"/>
        <end position="261"/>
    </location>
</feature>
<feature type="compositionally biased region" description="Acidic residues" evidence="2">
    <location>
        <begin position="265"/>
        <end position="281"/>
    </location>
</feature>
<feature type="compositionally biased region" description="Polar residues" evidence="2">
    <location>
        <begin position="288"/>
        <end position="305"/>
    </location>
</feature>
<feature type="compositionally biased region" description="Polar residues" evidence="2">
    <location>
        <begin position="518"/>
        <end position="528"/>
    </location>
</feature>
<sequence length="681" mass="76784">MSNDVYFESIHMQSNYEEFETQAQERENISKISTSLSKFRKMSPKSTRSFKVKSAPLTNRKARNRIKSINAHVSAQYKVSNGQQNDDILDFFLKRKHNISSILEGVEDLENRNIVSNDTPQPSDNTGNYSSQLFTQEEWFQILRRIKLRFPKLSARTRKSLKYVTTKLEHLKNINSDDDSPQLWTQAASLPEEGLVNEDMKWLYELDDEQMDIGSSFCNVDEDSDQKLFVLTLSQAMGEREKSEPDVEIISDSSPEPTQLLNDGIIEEEHEVDEEEEDNENEEKSEKQLASSPTQISSDDTQEQLTNRAEISSYEASSLFPNTLETQKQPVKSTIQKQASVVVPDYPKISNVKDEEIILSSSPTRDNEIFQTPRKYSVESVRSSPSSRSGRLGRLMVSPLKLLSPDRLDASQSVYSTARSSPTKQKRVRGREVNEKIVRKRFKTSRVEVAGNFHLKASDDLKIVSTVDKVNGSEVEDSEDDDHSVSIIEITHEVNDEELKAVDEEVTGEAEDGPSIIQVPSSPGNENLQEDLTSMQTSIASVTQEVPSNYTATQMRQALRSLDFPPERSKEGMASSLTRAASIAGTSVSSLLTPDAPYEEVKNQIYSAISESVKKDQLWHERVLSYEPIVLEEFKQWLGELDKDLKFDVTFLQQYCDHMGITTTIGTTTGTTAGTNTTTTD</sequence>
<name>SLX4_PICGU</name>
<proteinExistence type="inferred from homology"/>
<evidence type="ECO:0000255" key="1">
    <source>
        <dbReference type="HAMAP-Rule" id="MF_03110"/>
    </source>
</evidence>
<evidence type="ECO:0000256" key="2">
    <source>
        <dbReference type="SAM" id="MobiDB-lite"/>
    </source>
</evidence>